<evidence type="ECO:0000305" key="1"/>
<evidence type="ECO:0000305" key="2">
    <source ref="3"/>
</evidence>
<evidence type="ECO:0000312" key="3">
    <source>
        <dbReference type="EMBL" id="AAK65087.2"/>
    </source>
</evidence>
<evidence type="ECO:0000312" key="4">
    <source>
        <dbReference type="Proteomes" id="UP000001976"/>
    </source>
</evidence>
<evidence type="ECO:0007744" key="5">
    <source>
        <dbReference type="PDB" id="3RH7"/>
    </source>
</evidence>
<evidence type="ECO:0007829" key="6">
    <source>
        <dbReference type="PDB" id="3RH7"/>
    </source>
</evidence>
<comment type="similarity">
    <text evidence="1">Belongs to the non-flavoprotein flavin reductase family.</text>
</comment>
<sequence>MTAEVFDPRALRDAFGAFATGVTVVTASDAAGKPIGFTANSFTSVSLDPPLLLVCLAKSSRNYESMTSAGRFAINVLSETQKDVSNTFARPVEDRFAAVDWRLGRDGCPIFSDVAAWFECSMQDIIEAGDHVIIIGRVTAFENSGLNGLGYARGGYFTPRLAGKAVSAAVEGEIRLGAVLEQQGAVFLAGNETLSLPNCTVEGGDPARTLAAYLEQLTGLNVTIGFLYSVYEDKSDGRQNIVYHALASDGAPRQGRFLRPAELAAAKFSSSATADIINRFVLESSIGNFGIYFGDETGGTVHPIANKDAHS</sequence>
<keyword id="KW-0002">3D-structure</keyword>
<keyword id="KW-0285">Flavoprotein</keyword>
<keyword id="KW-0288">FMN</keyword>
<keyword id="KW-0547">Nucleotide-binding</keyword>
<keyword id="KW-0560">Oxidoreductase</keyword>
<keyword id="KW-0614">Plasmid</keyword>
<keyword id="KW-1185">Reference proteome</keyword>
<reference key="1">
    <citation type="journal article" date="2001" name="Proc. Natl. Acad. Sci. U.S.A.">
        <title>Nucleotide sequence and predicted functions of the entire Sinorhizobium meliloti pSymA megaplasmid.</title>
        <authorList>
            <person name="Barnett M.J."/>
            <person name="Fisher R.F."/>
            <person name="Jones T."/>
            <person name="Komp C."/>
            <person name="Abola A.P."/>
            <person name="Barloy-Hubler F."/>
            <person name="Bowser L."/>
            <person name="Capela D."/>
            <person name="Galibert F."/>
            <person name="Gouzy J."/>
            <person name="Gurjal M."/>
            <person name="Hong A."/>
            <person name="Huizar L."/>
            <person name="Hyman R.W."/>
            <person name="Kahn D."/>
            <person name="Kahn M.L."/>
            <person name="Kalman S."/>
            <person name="Keating D.H."/>
            <person name="Palm C."/>
            <person name="Peck M.C."/>
            <person name="Surzycki R."/>
            <person name="Wells D.H."/>
            <person name="Yeh K.-C."/>
            <person name="Davis R.W."/>
            <person name="Federspiel N.A."/>
            <person name="Long S.R."/>
        </authorList>
    </citation>
    <scope>NUCLEOTIDE SEQUENCE [LARGE SCALE GENOMIC DNA]</scope>
    <source>
        <strain evidence="3 4">1021</strain>
    </source>
</reference>
<reference key="2">
    <citation type="journal article" date="2001" name="Science">
        <title>The composite genome of the legume symbiont Sinorhizobium meliloti.</title>
        <authorList>
            <person name="Galibert F."/>
            <person name="Finan T.M."/>
            <person name="Long S.R."/>
            <person name="Puehler A."/>
            <person name="Abola P."/>
            <person name="Ampe F."/>
            <person name="Barloy-Hubler F."/>
            <person name="Barnett M.J."/>
            <person name="Becker A."/>
            <person name="Boistard P."/>
            <person name="Bothe G."/>
            <person name="Boutry M."/>
            <person name="Bowser L."/>
            <person name="Buhrmester J."/>
            <person name="Cadieu E."/>
            <person name="Capela D."/>
            <person name="Chain P."/>
            <person name="Cowie A."/>
            <person name="Davis R.W."/>
            <person name="Dreano S."/>
            <person name="Federspiel N.A."/>
            <person name="Fisher R.F."/>
            <person name="Gloux S."/>
            <person name="Godrie T."/>
            <person name="Goffeau A."/>
            <person name="Golding B."/>
            <person name="Gouzy J."/>
            <person name="Gurjal M."/>
            <person name="Hernandez-Lucas I."/>
            <person name="Hong A."/>
            <person name="Huizar L."/>
            <person name="Hyman R.W."/>
            <person name="Jones T."/>
            <person name="Kahn D."/>
            <person name="Kahn M.L."/>
            <person name="Kalman S."/>
            <person name="Keating D.H."/>
            <person name="Kiss E."/>
            <person name="Komp C."/>
            <person name="Lelaure V."/>
            <person name="Masuy D."/>
            <person name="Palm C."/>
            <person name="Peck M.C."/>
            <person name="Pohl T.M."/>
            <person name="Portetelle D."/>
            <person name="Purnelle B."/>
            <person name="Ramsperger U."/>
            <person name="Surzycki R."/>
            <person name="Thebault P."/>
            <person name="Vandenbol M."/>
            <person name="Vorhoelter F.J."/>
            <person name="Weidner S."/>
            <person name="Wells D.H."/>
            <person name="Wong K."/>
            <person name="Yeh K.-C."/>
            <person name="Batut J."/>
        </authorList>
    </citation>
    <scope>NUCLEOTIDE SEQUENCE [LARGE SCALE GENOMIC DNA]</scope>
    <source>
        <strain evidence="4">1021</strain>
    </source>
</reference>
<reference key="3">
    <citation type="submission" date="2011-04" db="PDB data bank">
        <title>Crystal structure of a hypothetical oxidoreductase (SMa0793) from Sinorhizobium meliloti 1021 at 3.00 A resolution.</title>
        <authorList>
            <consortium name="Joint Center for Structural Genomics (JCSG)"/>
        </authorList>
    </citation>
    <scope>X-RAY CRYSTALLOGRAPHY (3.00 ANGSTROMS) IN COMPLEX WITH FMN</scope>
    <scope>SUBUNIT</scope>
    <source>
        <strain>1021</strain>
    </source>
</reference>
<protein>
    <recommendedName>
        <fullName evidence="1">Probable flavin reductase</fullName>
        <ecNumber evidence="1">1.5.1.-</ecNumber>
    </recommendedName>
</protein>
<accession>Q92ZM6</accession>
<feature type="chain" id="PRO_0000445259" description="Probable flavin reductase">
    <location>
        <begin position="1"/>
        <end position="311"/>
    </location>
</feature>
<feature type="binding site" evidence="2 5">
    <location>
        <begin position="38"/>
        <end position="41"/>
    </location>
    <ligand>
        <name>FMN</name>
        <dbReference type="ChEBI" id="CHEBI:58210"/>
    </ligand>
</feature>
<feature type="binding site" evidence="2 5">
    <location>
        <begin position="55"/>
        <end position="61"/>
    </location>
    <ligand>
        <name>FMN</name>
        <dbReference type="ChEBI" id="CHEBI:58210"/>
    </ligand>
</feature>
<feature type="binding site" evidence="2 5">
    <location>
        <begin position="88"/>
        <end position="89"/>
    </location>
    <ligand>
        <name>FMN</name>
        <dbReference type="ChEBI" id="CHEBI:58210"/>
    </ligand>
</feature>
<feature type="binding site" evidence="2 5">
    <location>
        <position position="95"/>
    </location>
    <ligand>
        <name>FMN</name>
        <dbReference type="ChEBI" id="CHEBI:58210"/>
    </ligand>
</feature>
<feature type="helix" evidence="6">
    <location>
        <begin position="8"/>
        <end position="15"/>
    </location>
</feature>
<feature type="strand" evidence="6">
    <location>
        <begin position="23"/>
        <end position="28"/>
    </location>
</feature>
<feature type="strand" evidence="6">
    <location>
        <begin position="34"/>
        <end position="39"/>
    </location>
</feature>
<feature type="strand" evidence="6">
    <location>
        <begin position="42"/>
        <end position="46"/>
    </location>
</feature>
<feature type="turn" evidence="6">
    <location>
        <begin position="47"/>
        <end position="50"/>
    </location>
</feature>
<feature type="strand" evidence="6">
    <location>
        <begin position="51"/>
        <end position="57"/>
    </location>
</feature>
<feature type="helix" evidence="6">
    <location>
        <begin position="63"/>
        <end position="68"/>
    </location>
</feature>
<feature type="strand" evidence="6">
    <location>
        <begin position="70"/>
        <end position="76"/>
    </location>
</feature>
<feature type="helix" evidence="6">
    <location>
        <begin position="82"/>
        <end position="87"/>
    </location>
</feature>
<feature type="helix" evidence="6">
    <location>
        <begin position="96"/>
        <end position="98"/>
    </location>
</feature>
<feature type="strand" evidence="6">
    <location>
        <begin position="101"/>
        <end position="103"/>
    </location>
</feature>
<feature type="strand" evidence="6">
    <location>
        <begin position="109"/>
        <end position="111"/>
    </location>
</feature>
<feature type="strand" evidence="6">
    <location>
        <begin position="115"/>
        <end position="128"/>
    </location>
</feature>
<feature type="strand" evidence="6">
    <location>
        <begin position="131"/>
        <end position="143"/>
    </location>
</feature>
<feature type="strand" evidence="6">
    <location>
        <begin position="150"/>
        <end position="152"/>
    </location>
</feature>
<feature type="strand" evidence="6">
    <location>
        <begin position="155"/>
        <end position="157"/>
    </location>
</feature>
<feature type="helix" evidence="6">
    <location>
        <begin position="160"/>
        <end position="171"/>
    </location>
</feature>
<feature type="strand" evidence="6">
    <location>
        <begin position="174"/>
        <end position="184"/>
    </location>
</feature>
<feature type="strand" evidence="6">
    <location>
        <begin position="186"/>
        <end position="189"/>
    </location>
</feature>
<feature type="strand" evidence="6">
    <location>
        <begin position="191"/>
        <end position="195"/>
    </location>
</feature>
<feature type="strand" evidence="6">
    <location>
        <begin position="198"/>
        <end position="204"/>
    </location>
</feature>
<feature type="helix" evidence="6">
    <location>
        <begin position="206"/>
        <end position="218"/>
    </location>
</feature>
<feature type="strand" evidence="6">
    <location>
        <begin position="222"/>
        <end position="232"/>
    </location>
</feature>
<feature type="turn" evidence="6">
    <location>
        <begin position="234"/>
        <end position="236"/>
    </location>
</feature>
<feature type="strand" evidence="6">
    <location>
        <begin position="239"/>
        <end position="247"/>
    </location>
</feature>
<feature type="strand" evidence="6">
    <location>
        <begin position="253"/>
        <end position="258"/>
    </location>
</feature>
<feature type="helix" evidence="6">
    <location>
        <begin position="260"/>
        <end position="263"/>
    </location>
</feature>
<feature type="strand" evidence="6">
    <location>
        <begin position="267"/>
        <end position="270"/>
    </location>
</feature>
<feature type="helix" evidence="6">
    <location>
        <begin position="271"/>
        <end position="282"/>
    </location>
</feature>
<geneLocation type="plasmid" evidence="3 4">
    <name>pSymA</name>
</geneLocation>
<gene>
    <name evidence="1" type="ordered locus">RA0429</name>
    <name evidence="3" type="ORF">SMa0793</name>
</gene>
<name>Y0793_RHIME</name>
<proteinExistence type="evidence at protein level"/>
<dbReference type="EC" id="1.5.1.-" evidence="1"/>
<dbReference type="EMBL" id="AE006469">
    <property type="protein sequence ID" value="AAK65087.2"/>
    <property type="molecule type" value="Genomic_DNA"/>
</dbReference>
<dbReference type="RefSeq" id="NP_435675.2">
    <property type="nucleotide sequence ID" value="NC_003037.1"/>
</dbReference>
<dbReference type="RefSeq" id="WP_010967419.1">
    <property type="nucleotide sequence ID" value="NC_003037.1"/>
</dbReference>
<dbReference type="PDB" id="3RH7">
    <property type="method" value="X-ray"/>
    <property type="resolution" value="3.00 A"/>
    <property type="chains" value="A/B/C/D/E/F=1-311"/>
</dbReference>
<dbReference type="PDBsum" id="3RH7"/>
<dbReference type="SMR" id="Q92ZM6"/>
<dbReference type="DNASU" id="1235465"/>
<dbReference type="EnsemblBacteria" id="AAK65087">
    <property type="protein sequence ID" value="AAK65087"/>
    <property type="gene ID" value="SMa0793"/>
</dbReference>
<dbReference type="KEGG" id="sme:SMa0793"/>
<dbReference type="PATRIC" id="fig|266834.11.peg.445"/>
<dbReference type="HOGENOM" id="CLU_896101_0_0_5"/>
<dbReference type="OrthoDB" id="9792858at2"/>
<dbReference type="EvolutionaryTrace" id="Q92ZM6"/>
<dbReference type="Proteomes" id="UP000001976">
    <property type="component" value="Plasmid pSymA"/>
</dbReference>
<dbReference type="GO" id="GO:0010181">
    <property type="term" value="F:FMN binding"/>
    <property type="evidence" value="ECO:0007669"/>
    <property type="project" value="InterPro"/>
</dbReference>
<dbReference type="GO" id="GO:0042602">
    <property type="term" value="F:riboflavin reductase (NADPH) activity"/>
    <property type="evidence" value="ECO:0007669"/>
    <property type="project" value="TreeGrafter"/>
</dbReference>
<dbReference type="Gene3D" id="2.30.110.10">
    <property type="entry name" value="Electron Transport, Fmn-binding Protein, Chain A"/>
    <property type="match status" value="1"/>
</dbReference>
<dbReference type="Gene3D" id="3.90.79.10">
    <property type="entry name" value="Nucleoside Triphosphate Pyrophosphohydrolase"/>
    <property type="match status" value="1"/>
</dbReference>
<dbReference type="InterPro" id="IPR002563">
    <property type="entry name" value="Flavin_Rdtase-like_dom"/>
</dbReference>
<dbReference type="InterPro" id="IPR050268">
    <property type="entry name" value="NADH-dep_flavin_reductase"/>
</dbReference>
<dbReference type="InterPro" id="IPR012349">
    <property type="entry name" value="Split_barrel_FMN-bd"/>
</dbReference>
<dbReference type="PANTHER" id="PTHR30466">
    <property type="entry name" value="FLAVIN REDUCTASE"/>
    <property type="match status" value="1"/>
</dbReference>
<dbReference type="PANTHER" id="PTHR30466:SF11">
    <property type="entry name" value="FLAVIN-DEPENDENT MONOOXYGENASE, REDUCTASE SUBUNIT HSAB"/>
    <property type="match status" value="1"/>
</dbReference>
<dbReference type="Pfam" id="PF01613">
    <property type="entry name" value="Flavin_Reduct"/>
    <property type="match status" value="1"/>
</dbReference>
<dbReference type="SMART" id="SM00903">
    <property type="entry name" value="Flavin_Reduct"/>
    <property type="match status" value="1"/>
</dbReference>
<dbReference type="SUPFAM" id="SSF50475">
    <property type="entry name" value="FMN-binding split barrel"/>
    <property type="match status" value="1"/>
</dbReference>
<organism>
    <name type="scientific">Rhizobium meliloti (strain 1021)</name>
    <name type="common">Ensifer meliloti</name>
    <name type="synonym">Sinorhizobium meliloti</name>
    <dbReference type="NCBI Taxonomy" id="266834"/>
    <lineage>
        <taxon>Bacteria</taxon>
        <taxon>Pseudomonadati</taxon>
        <taxon>Pseudomonadota</taxon>
        <taxon>Alphaproteobacteria</taxon>
        <taxon>Hyphomicrobiales</taxon>
        <taxon>Rhizobiaceae</taxon>
        <taxon>Sinorhizobium/Ensifer group</taxon>
        <taxon>Sinorhizobium</taxon>
    </lineage>
</organism>